<accession>P00628</accession>
<keyword id="KW-0106">Calcium</keyword>
<keyword id="KW-0903">Direct protein sequencing</keyword>
<keyword id="KW-1015">Disulfide bond</keyword>
<keyword id="KW-0378">Hydrolase</keyword>
<keyword id="KW-0442">Lipid degradation</keyword>
<keyword id="KW-0443">Lipid metabolism</keyword>
<keyword id="KW-0479">Metal-binding</keyword>
<keyword id="KW-0528">Neurotoxin</keyword>
<keyword id="KW-0638">Presynaptic neurotoxin</keyword>
<keyword id="KW-0964">Secreted</keyword>
<keyword id="KW-0732">Signal</keyword>
<keyword id="KW-0800">Toxin</keyword>
<feature type="signal peptide" evidence="1">
    <location>
        <begin position="1" status="less than"/>
        <end status="unknown"/>
    </location>
</feature>
<feature type="propeptide" id="PRO_0000291948" evidence="4 5">
    <location>
        <begin status="unknown"/>
        <end position="17"/>
    </location>
</feature>
<feature type="chain" id="PRO_0000161636" description="Basic phospholipase A2 KBf-VA">
    <location>
        <begin position="18"/>
        <end position="135"/>
    </location>
</feature>
<feature type="active site" evidence="1">
    <location>
        <position position="63"/>
    </location>
</feature>
<feature type="active site" evidence="1">
    <location>
        <position position="109"/>
    </location>
</feature>
<feature type="binding site" evidence="1">
    <location>
        <position position="43"/>
    </location>
    <ligand>
        <name>Ca(2+)</name>
        <dbReference type="ChEBI" id="CHEBI:29108"/>
    </ligand>
</feature>
<feature type="binding site" evidence="1">
    <location>
        <position position="45"/>
    </location>
    <ligand>
        <name>Ca(2+)</name>
        <dbReference type="ChEBI" id="CHEBI:29108"/>
    </ligand>
</feature>
<feature type="binding site" evidence="1">
    <location>
        <position position="47"/>
    </location>
    <ligand>
        <name>Ca(2+)</name>
        <dbReference type="ChEBI" id="CHEBI:29108"/>
    </ligand>
</feature>
<feature type="binding site" evidence="1">
    <location>
        <position position="64"/>
    </location>
    <ligand>
        <name>Ca(2+)</name>
        <dbReference type="ChEBI" id="CHEBI:29108"/>
    </ligand>
</feature>
<feature type="disulfide bond" evidence="1">
    <location>
        <begin position="28"/>
        <end position="87"/>
    </location>
</feature>
<feature type="disulfide bond" evidence="1">
    <location>
        <begin position="42"/>
        <end position="134"/>
    </location>
</feature>
<feature type="disulfide bond" evidence="1">
    <location>
        <begin position="44"/>
        <end position="60"/>
    </location>
</feature>
<feature type="disulfide bond" evidence="1">
    <location>
        <begin position="59"/>
        <end position="115"/>
    </location>
</feature>
<feature type="disulfide bond" evidence="1">
    <location>
        <begin position="66"/>
        <end position="108"/>
    </location>
</feature>
<feature type="disulfide bond" evidence="1">
    <location>
        <begin position="76"/>
        <end position="101"/>
    </location>
</feature>
<feature type="disulfide bond" evidence="1">
    <location>
        <begin position="94"/>
        <end position="106"/>
    </location>
</feature>
<feature type="sequence variant">
    <original>H</original>
    <variation>Q</variation>
    <location>
        <position position="65"/>
    </location>
</feature>
<feature type="sequence variant">
    <original>S</original>
    <variation>T</variation>
    <location>
        <position position="82"/>
    </location>
</feature>
<feature type="sequence variant">
    <original>L</original>
    <variation>I</variation>
    <location>
        <position position="92"/>
    </location>
</feature>
<feature type="sequence variant">
    <original>ARN</original>
    <variation>GRT</variation>
    <location>
        <begin position="102"/>
        <end position="104"/>
    </location>
</feature>
<feature type="sequence variant">
    <original>N</original>
    <variation>D</variation>
    <location>
        <position position="129"/>
    </location>
</feature>
<feature type="sequence variant">
    <original>T</original>
    <variation>K</variation>
    <location>
        <position position="132"/>
    </location>
</feature>
<feature type="non-terminal residue">
    <location>
        <position position="1"/>
    </location>
</feature>
<proteinExistence type="evidence at protein level"/>
<sequence length="135" mass="14737">AVCVSLLGAANIPPQPLNLLQFKNMIQCAGSRLWVAYVKYGCYCGPGGTGTPLDQLDRCCQTHDHCYDNAKKFGNCIPYFKSYEYTCNKPDLTCTDAKGSCARNVCDCDRAAAICFAAAPYNLANFGINKETHCQ</sequence>
<organism>
    <name type="scientific">Bungarus fasciatus</name>
    <name type="common">Banded krait</name>
    <name type="synonym">Pseudoboa fasciata</name>
    <dbReference type="NCBI Taxonomy" id="8613"/>
    <lineage>
        <taxon>Eukaryota</taxon>
        <taxon>Metazoa</taxon>
        <taxon>Chordata</taxon>
        <taxon>Craniata</taxon>
        <taxon>Vertebrata</taxon>
        <taxon>Euteleostomi</taxon>
        <taxon>Lepidosauria</taxon>
        <taxon>Squamata</taxon>
        <taxon>Bifurcata</taxon>
        <taxon>Unidentata</taxon>
        <taxon>Episquamata</taxon>
        <taxon>Toxicofera</taxon>
        <taxon>Serpentes</taxon>
        <taxon>Colubroidea</taxon>
        <taxon>Elapidae</taxon>
        <taxon>Bungarinae</taxon>
        <taxon>Bungarus</taxon>
    </lineage>
</organism>
<comment type="function">
    <text>Snake venom phospholipase A2 (PLA2) that inhibits neuromuscular transmission by blocking acetylcholine release from the nerve termini. PLA2 catalyzes the calcium-dependent hydrolysis of the 2-acyl groups in 3-sn-phosphoglycerides.</text>
</comment>
<comment type="catalytic activity">
    <reaction evidence="2 3">
        <text>a 1,2-diacyl-sn-glycero-3-phosphocholine + H2O = a 1-acyl-sn-glycero-3-phosphocholine + a fatty acid + H(+)</text>
        <dbReference type="Rhea" id="RHEA:15801"/>
        <dbReference type="ChEBI" id="CHEBI:15377"/>
        <dbReference type="ChEBI" id="CHEBI:15378"/>
        <dbReference type="ChEBI" id="CHEBI:28868"/>
        <dbReference type="ChEBI" id="CHEBI:57643"/>
        <dbReference type="ChEBI" id="CHEBI:58168"/>
        <dbReference type="EC" id="3.1.1.4"/>
    </reaction>
</comment>
<comment type="cofactor">
    <cofactor evidence="1">
        <name>Ca(2+)</name>
        <dbReference type="ChEBI" id="CHEBI:29108"/>
    </cofactor>
    <text evidence="1">Binds 1 Ca(2+) ion.</text>
</comment>
<comment type="subcellular location">
    <subcellularLocation>
        <location>Secreted</location>
    </subcellularLocation>
</comment>
<comment type="tissue specificity">
    <text>Expressed by the venom gland.</text>
</comment>
<comment type="mass spectrometry" mass="13079.0" error="1.0" method="Electrospray" evidence="4">
    <text>In KBf-Va.</text>
</comment>
<comment type="similarity">
    <text evidence="6">Belongs to the phospholipase A2 family. Group I subfamily. D49 sub-subfamily.</text>
</comment>
<reference key="1">
    <citation type="journal article" date="2007" name="FEBS J.">
        <title>Sequences, geographic variations and molecular phylogeny of venom phospholipases and three-finger toxins of eastern India Bungarus fasciatus and kinetic analyses of its Pro31 phospholipases A2.</title>
        <authorList>
            <person name="Tsai I.-H."/>
            <person name="Tsai H.-Y."/>
            <person name="Saha A."/>
            <person name="Gomes A."/>
        </authorList>
    </citation>
    <scope>NUCLEOTIDE SEQUENCE [MRNA]</scope>
    <scope>PROTEIN SEQUENCE OF 18-37</scope>
    <scope>MASS SPECTROMETRY</scope>
    <source>
        <tissue>Venom</tissue>
        <tissue>Venom gland</tissue>
    </source>
</reference>
<reference key="2">
    <citation type="journal article" date="1981" name="Toxicon">
        <title>Complete amino acid sequences of two cardiotoxin-like analogues from Bungarus fasciatus (banded krait) snake venom.</title>
        <authorList>
            <person name="Lu H.-S."/>
            <person name="Lo T.-B."/>
        </authorList>
    </citation>
    <scope>PROTEIN SEQUENCE OF 18-135</scope>
    <source>
        <tissue>Venom</tissue>
    </source>
</reference>
<reference key="3">
    <citation type="journal article" date="1990" name="Toxicon">
        <title>Revised amino acid sequences of the three major phospholipases A2 from Bungarus fasciatus (banded krait) venom.</title>
        <authorList>
            <person name="Liu C.-S."/>
            <person name="Chen J.-M."/>
            <person name="Chang C.-H."/>
            <person name="Chen S.-W."/>
            <person name="Tsai I.-H."/>
            <person name="Lu H.-S."/>
            <person name="Lo T.-B."/>
        </authorList>
    </citation>
    <scope>SEQUENCE REVISION</scope>
    <source>
        <tissue>Venom</tissue>
    </source>
</reference>
<evidence type="ECO:0000250" key="1"/>
<evidence type="ECO:0000255" key="2">
    <source>
        <dbReference type="PROSITE-ProRule" id="PRU10035"/>
    </source>
</evidence>
<evidence type="ECO:0000255" key="3">
    <source>
        <dbReference type="PROSITE-ProRule" id="PRU10036"/>
    </source>
</evidence>
<evidence type="ECO:0000269" key="4">
    <source>
    </source>
</evidence>
<evidence type="ECO:0000269" key="5">
    <source>
    </source>
</evidence>
<evidence type="ECO:0000305" key="6"/>
<protein>
    <recommendedName>
        <fullName>Basic phospholipase A2 KBf-VA</fullName>
        <shortName>KBf Va</shortName>
        <shortName>svPLA2</shortName>
        <ecNumber>3.1.1.4</ecNumber>
    </recommendedName>
    <alternativeName>
        <fullName>Phosphatidylcholine 2-acylhydrolase</fullName>
    </alternativeName>
    <alternativeName>
        <fullName>Toxin V-2</fullName>
    </alternativeName>
</protein>
<dbReference type="EC" id="3.1.1.4"/>
<dbReference type="EMBL" id="DQ508413">
    <property type="status" value="NOT_ANNOTATED_CDS"/>
    <property type="molecule type" value="mRNA"/>
</dbReference>
<dbReference type="PIR" id="A36487">
    <property type="entry name" value="PSKFT2"/>
</dbReference>
<dbReference type="SMR" id="P00628"/>
<dbReference type="GO" id="GO:0005576">
    <property type="term" value="C:extracellular region"/>
    <property type="evidence" value="ECO:0007669"/>
    <property type="project" value="UniProtKB-SubCell"/>
</dbReference>
<dbReference type="GO" id="GO:0005509">
    <property type="term" value="F:calcium ion binding"/>
    <property type="evidence" value="ECO:0007669"/>
    <property type="project" value="InterPro"/>
</dbReference>
<dbReference type="GO" id="GO:0047498">
    <property type="term" value="F:calcium-dependent phospholipase A2 activity"/>
    <property type="evidence" value="ECO:0007669"/>
    <property type="project" value="TreeGrafter"/>
</dbReference>
<dbReference type="GO" id="GO:0005543">
    <property type="term" value="F:phospholipid binding"/>
    <property type="evidence" value="ECO:0007669"/>
    <property type="project" value="TreeGrafter"/>
</dbReference>
<dbReference type="GO" id="GO:0005102">
    <property type="term" value="F:signaling receptor binding"/>
    <property type="evidence" value="ECO:0007669"/>
    <property type="project" value="TreeGrafter"/>
</dbReference>
<dbReference type="GO" id="GO:0090729">
    <property type="term" value="F:toxin activity"/>
    <property type="evidence" value="ECO:0007669"/>
    <property type="project" value="UniProtKB-KW"/>
</dbReference>
<dbReference type="GO" id="GO:0050482">
    <property type="term" value="P:arachidonate secretion"/>
    <property type="evidence" value="ECO:0007669"/>
    <property type="project" value="InterPro"/>
</dbReference>
<dbReference type="GO" id="GO:0006633">
    <property type="term" value="P:fatty acid biosynthetic process"/>
    <property type="evidence" value="ECO:0007669"/>
    <property type="project" value="TreeGrafter"/>
</dbReference>
<dbReference type="GO" id="GO:0016042">
    <property type="term" value="P:lipid catabolic process"/>
    <property type="evidence" value="ECO:0007669"/>
    <property type="project" value="UniProtKB-KW"/>
</dbReference>
<dbReference type="GO" id="GO:0006644">
    <property type="term" value="P:phospholipid metabolic process"/>
    <property type="evidence" value="ECO:0007669"/>
    <property type="project" value="InterPro"/>
</dbReference>
<dbReference type="GO" id="GO:0048146">
    <property type="term" value="P:positive regulation of fibroblast proliferation"/>
    <property type="evidence" value="ECO:0007669"/>
    <property type="project" value="TreeGrafter"/>
</dbReference>
<dbReference type="CDD" id="cd00125">
    <property type="entry name" value="PLA2c"/>
    <property type="match status" value="1"/>
</dbReference>
<dbReference type="FunFam" id="1.20.90.10:FF:000007">
    <property type="entry name" value="Acidic phospholipase A2"/>
    <property type="match status" value="1"/>
</dbReference>
<dbReference type="Gene3D" id="1.20.90.10">
    <property type="entry name" value="Phospholipase A2 domain"/>
    <property type="match status" value="1"/>
</dbReference>
<dbReference type="InterPro" id="IPR001211">
    <property type="entry name" value="PLipase_A2"/>
</dbReference>
<dbReference type="InterPro" id="IPR033112">
    <property type="entry name" value="PLipase_A2_Asp_AS"/>
</dbReference>
<dbReference type="InterPro" id="IPR016090">
    <property type="entry name" value="PLipase_A2_dom"/>
</dbReference>
<dbReference type="InterPro" id="IPR036444">
    <property type="entry name" value="PLipase_A2_dom_sf"/>
</dbReference>
<dbReference type="InterPro" id="IPR033113">
    <property type="entry name" value="PLipase_A2_His_AS"/>
</dbReference>
<dbReference type="PANTHER" id="PTHR11716:SF94">
    <property type="entry name" value="PHOSPHOLIPASE A2"/>
    <property type="match status" value="1"/>
</dbReference>
<dbReference type="PANTHER" id="PTHR11716">
    <property type="entry name" value="PHOSPHOLIPASE A2 FAMILY MEMBER"/>
    <property type="match status" value="1"/>
</dbReference>
<dbReference type="Pfam" id="PF00068">
    <property type="entry name" value="Phospholip_A2_1"/>
    <property type="match status" value="1"/>
</dbReference>
<dbReference type="PRINTS" id="PR00389">
    <property type="entry name" value="PHPHLIPASEA2"/>
</dbReference>
<dbReference type="SMART" id="SM00085">
    <property type="entry name" value="PA2c"/>
    <property type="match status" value="1"/>
</dbReference>
<dbReference type="SUPFAM" id="SSF48619">
    <property type="entry name" value="Phospholipase A2, PLA2"/>
    <property type="match status" value="1"/>
</dbReference>
<dbReference type="PROSITE" id="PS00119">
    <property type="entry name" value="PA2_ASP"/>
    <property type="match status" value="1"/>
</dbReference>
<dbReference type="PROSITE" id="PS00118">
    <property type="entry name" value="PA2_HIS"/>
    <property type="match status" value="1"/>
</dbReference>
<name>PA2BV_BUNFA</name>